<dbReference type="EC" id="2.1.1.173" evidence="1"/>
<dbReference type="EC" id="2.1.1.264" evidence="1"/>
<dbReference type="EMBL" id="AL590842">
    <property type="protein sequence ID" value="CAL20070.1"/>
    <property type="molecule type" value="Genomic_DNA"/>
</dbReference>
<dbReference type="EMBL" id="AE009952">
    <property type="protein sequence ID" value="AAM86303.1"/>
    <property type="molecule type" value="Genomic_DNA"/>
</dbReference>
<dbReference type="EMBL" id="AE017042">
    <property type="protein sequence ID" value="AAS61418.1"/>
    <property type="molecule type" value="Genomic_DNA"/>
</dbReference>
<dbReference type="PIR" id="AD0173">
    <property type="entry name" value="AD0173"/>
</dbReference>
<dbReference type="RefSeq" id="YP_002346441.1">
    <property type="nucleotide sequence ID" value="NC_003143.1"/>
</dbReference>
<dbReference type="SMR" id="Q7CHK7"/>
<dbReference type="IntAct" id="Q7CHK7">
    <property type="interactions" value="2"/>
</dbReference>
<dbReference type="STRING" id="214092.YPO1418"/>
<dbReference type="PaxDb" id="214092-YPO1418"/>
<dbReference type="EnsemblBacteria" id="AAS61418">
    <property type="protein sequence ID" value="AAS61418"/>
    <property type="gene ID" value="YP_1175"/>
</dbReference>
<dbReference type="KEGG" id="ype:YPO1418"/>
<dbReference type="KEGG" id="ypk:y2751"/>
<dbReference type="KEGG" id="ypm:YP_1175"/>
<dbReference type="PATRIC" id="fig|214092.21.peg.1746"/>
<dbReference type="eggNOG" id="COG0116">
    <property type="taxonomic scope" value="Bacteria"/>
</dbReference>
<dbReference type="eggNOG" id="COG1092">
    <property type="taxonomic scope" value="Bacteria"/>
</dbReference>
<dbReference type="HOGENOM" id="CLU_014042_2_0_6"/>
<dbReference type="OMA" id="TYLNWAE"/>
<dbReference type="OrthoDB" id="9809404at2"/>
<dbReference type="Proteomes" id="UP000000815">
    <property type="component" value="Chromosome"/>
</dbReference>
<dbReference type="Proteomes" id="UP000001019">
    <property type="component" value="Chromosome"/>
</dbReference>
<dbReference type="Proteomes" id="UP000002490">
    <property type="component" value="Chromosome"/>
</dbReference>
<dbReference type="GO" id="GO:0005737">
    <property type="term" value="C:cytoplasm"/>
    <property type="evidence" value="ECO:0007669"/>
    <property type="project" value="UniProtKB-SubCell"/>
</dbReference>
<dbReference type="GO" id="GO:0052915">
    <property type="term" value="F:23S rRNA (guanine(2445)-N(2))-methyltransferase activity"/>
    <property type="evidence" value="ECO:0007669"/>
    <property type="project" value="UniProtKB-UniRule"/>
</dbReference>
<dbReference type="GO" id="GO:0003723">
    <property type="term" value="F:RNA binding"/>
    <property type="evidence" value="ECO:0007669"/>
    <property type="project" value="UniProtKB-KW"/>
</dbReference>
<dbReference type="GO" id="GO:0008990">
    <property type="term" value="F:rRNA (guanine-N2-)-methyltransferase activity"/>
    <property type="evidence" value="ECO:0000318"/>
    <property type="project" value="GO_Central"/>
</dbReference>
<dbReference type="GO" id="GO:0070043">
    <property type="term" value="F:rRNA (guanine-N7-)-methyltransferase activity"/>
    <property type="evidence" value="ECO:0000318"/>
    <property type="project" value="GO_Central"/>
</dbReference>
<dbReference type="CDD" id="cd02440">
    <property type="entry name" value="AdoMet_MTases"/>
    <property type="match status" value="2"/>
</dbReference>
<dbReference type="CDD" id="cd11715">
    <property type="entry name" value="THUMP_AdoMetMT"/>
    <property type="match status" value="1"/>
</dbReference>
<dbReference type="FunFam" id="3.30.750.80:FF:000001">
    <property type="entry name" value="Ribosomal RNA large subunit methyltransferase K/L"/>
    <property type="match status" value="1"/>
</dbReference>
<dbReference type="FunFam" id="3.40.50.150:FF:000039">
    <property type="entry name" value="Ribosomal RNA large subunit methyltransferase K/L"/>
    <property type="match status" value="1"/>
</dbReference>
<dbReference type="Gene3D" id="3.30.2130.30">
    <property type="match status" value="1"/>
</dbReference>
<dbReference type="Gene3D" id="3.30.750.80">
    <property type="entry name" value="RNA methyltransferase domain (HRMD) like"/>
    <property type="match status" value="1"/>
</dbReference>
<dbReference type="Gene3D" id="3.40.50.150">
    <property type="entry name" value="Vaccinia Virus protein VP39"/>
    <property type="match status" value="2"/>
</dbReference>
<dbReference type="HAMAP" id="MF_01858">
    <property type="entry name" value="23SrRNA_methyltr_KL"/>
    <property type="match status" value="1"/>
</dbReference>
<dbReference type="InterPro" id="IPR017244">
    <property type="entry name" value="23SrRNA_methyltr_KL"/>
</dbReference>
<dbReference type="InterPro" id="IPR002052">
    <property type="entry name" value="DNA_methylase_N6_adenine_CS"/>
</dbReference>
<dbReference type="InterPro" id="IPR000241">
    <property type="entry name" value="RlmKL-like_Mtase"/>
</dbReference>
<dbReference type="InterPro" id="IPR053943">
    <property type="entry name" value="RlmKL-like_Mtase_CS"/>
</dbReference>
<dbReference type="InterPro" id="IPR054170">
    <property type="entry name" value="RlmL_1st"/>
</dbReference>
<dbReference type="InterPro" id="IPR019614">
    <property type="entry name" value="SAM-dep_methyl-trfase"/>
</dbReference>
<dbReference type="InterPro" id="IPR029063">
    <property type="entry name" value="SAM-dependent_MTases_sf"/>
</dbReference>
<dbReference type="InterPro" id="IPR004114">
    <property type="entry name" value="THUMP_dom"/>
</dbReference>
<dbReference type="NCBIfam" id="NF008748">
    <property type="entry name" value="PRK11783.1"/>
    <property type="match status" value="1"/>
</dbReference>
<dbReference type="PANTHER" id="PTHR47313">
    <property type="entry name" value="RIBOSOMAL RNA LARGE SUBUNIT METHYLTRANSFERASE K/L"/>
    <property type="match status" value="1"/>
</dbReference>
<dbReference type="PANTHER" id="PTHR47313:SF1">
    <property type="entry name" value="RIBOSOMAL RNA LARGE SUBUNIT METHYLTRANSFERASE K_L"/>
    <property type="match status" value="1"/>
</dbReference>
<dbReference type="Pfam" id="PF10672">
    <property type="entry name" value="Methyltrans_SAM"/>
    <property type="match status" value="1"/>
</dbReference>
<dbReference type="Pfam" id="PF22020">
    <property type="entry name" value="RlmL_1st"/>
    <property type="match status" value="1"/>
</dbReference>
<dbReference type="Pfam" id="PF02926">
    <property type="entry name" value="THUMP"/>
    <property type="match status" value="1"/>
</dbReference>
<dbReference type="Pfam" id="PF01170">
    <property type="entry name" value="UPF0020"/>
    <property type="match status" value="1"/>
</dbReference>
<dbReference type="PIRSF" id="PIRSF037618">
    <property type="entry name" value="RNA_Mtase_bacteria_prd"/>
    <property type="match status" value="1"/>
</dbReference>
<dbReference type="SMART" id="SM00981">
    <property type="entry name" value="THUMP"/>
    <property type="match status" value="1"/>
</dbReference>
<dbReference type="SUPFAM" id="SSF53335">
    <property type="entry name" value="S-adenosyl-L-methionine-dependent methyltransferases"/>
    <property type="match status" value="2"/>
</dbReference>
<dbReference type="PROSITE" id="PS51165">
    <property type="entry name" value="THUMP"/>
    <property type="match status" value="1"/>
</dbReference>
<dbReference type="PROSITE" id="PS01261">
    <property type="entry name" value="UPF0020"/>
    <property type="match status" value="1"/>
</dbReference>
<feature type="chain" id="PRO_0000366866" description="Ribosomal RNA large subunit methyltransferase K/L">
    <location>
        <begin position="1"/>
        <end position="706"/>
    </location>
</feature>
<feature type="domain" description="THUMP" evidence="1">
    <location>
        <begin position="43"/>
        <end position="154"/>
    </location>
</feature>
<reference key="1">
    <citation type="journal article" date="2001" name="Nature">
        <title>Genome sequence of Yersinia pestis, the causative agent of plague.</title>
        <authorList>
            <person name="Parkhill J."/>
            <person name="Wren B.W."/>
            <person name="Thomson N.R."/>
            <person name="Titball R.W."/>
            <person name="Holden M.T.G."/>
            <person name="Prentice M.B."/>
            <person name="Sebaihia M."/>
            <person name="James K.D."/>
            <person name="Churcher C.M."/>
            <person name="Mungall K.L."/>
            <person name="Baker S."/>
            <person name="Basham D."/>
            <person name="Bentley S.D."/>
            <person name="Brooks K."/>
            <person name="Cerdeno-Tarraga A.-M."/>
            <person name="Chillingworth T."/>
            <person name="Cronin A."/>
            <person name="Davies R.M."/>
            <person name="Davis P."/>
            <person name="Dougan G."/>
            <person name="Feltwell T."/>
            <person name="Hamlin N."/>
            <person name="Holroyd S."/>
            <person name="Jagels K."/>
            <person name="Karlyshev A.V."/>
            <person name="Leather S."/>
            <person name="Moule S."/>
            <person name="Oyston P.C.F."/>
            <person name="Quail M.A."/>
            <person name="Rutherford K.M."/>
            <person name="Simmonds M."/>
            <person name="Skelton J."/>
            <person name="Stevens K."/>
            <person name="Whitehead S."/>
            <person name="Barrell B.G."/>
        </authorList>
    </citation>
    <scope>NUCLEOTIDE SEQUENCE [LARGE SCALE GENOMIC DNA]</scope>
    <source>
        <strain>CO-92 / Biovar Orientalis</strain>
    </source>
</reference>
<reference key="2">
    <citation type="journal article" date="2002" name="J. Bacteriol.">
        <title>Genome sequence of Yersinia pestis KIM.</title>
        <authorList>
            <person name="Deng W."/>
            <person name="Burland V."/>
            <person name="Plunkett G. III"/>
            <person name="Boutin A."/>
            <person name="Mayhew G.F."/>
            <person name="Liss P."/>
            <person name="Perna N.T."/>
            <person name="Rose D.J."/>
            <person name="Mau B."/>
            <person name="Zhou S."/>
            <person name="Schwartz D.C."/>
            <person name="Fetherston J.D."/>
            <person name="Lindler L.E."/>
            <person name="Brubaker R.R."/>
            <person name="Plano G.V."/>
            <person name="Straley S.C."/>
            <person name="McDonough K.A."/>
            <person name="Nilles M.L."/>
            <person name="Matson J.S."/>
            <person name="Blattner F.R."/>
            <person name="Perry R.D."/>
        </authorList>
    </citation>
    <scope>NUCLEOTIDE SEQUENCE [LARGE SCALE GENOMIC DNA]</scope>
    <source>
        <strain>KIM10+ / Biovar Mediaevalis</strain>
    </source>
</reference>
<reference key="3">
    <citation type="journal article" date="2004" name="DNA Res.">
        <title>Complete genome sequence of Yersinia pestis strain 91001, an isolate avirulent to humans.</title>
        <authorList>
            <person name="Song Y."/>
            <person name="Tong Z."/>
            <person name="Wang J."/>
            <person name="Wang L."/>
            <person name="Guo Z."/>
            <person name="Han Y."/>
            <person name="Zhang J."/>
            <person name="Pei D."/>
            <person name="Zhou D."/>
            <person name="Qin H."/>
            <person name="Pang X."/>
            <person name="Han Y."/>
            <person name="Zhai J."/>
            <person name="Li M."/>
            <person name="Cui B."/>
            <person name="Qi Z."/>
            <person name="Jin L."/>
            <person name="Dai R."/>
            <person name="Chen F."/>
            <person name="Li S."/>
            <person name="Ye C."/>
            <person name="Du Z."/>
            <person name="Lin W."/>
            <person name="Wang J."/>
            <person name="Yu J."/>
            <person name="Yang H."/>
            <person name="Wang J."/>
            <person name="Huang P."/>
            <person name="Yang R."/>
        </authorList>
    </citation>
    <scope>NUCLEOTIDE SEQUENCE [LARGE SCALE GENOMIC DNA]</scope>
    <source>
        <strain>91001 / Biovar Mediaevalis</strain>
    </source>
</reference>
<accession>Q7CHK7</accession>
<accession>Q74VU8</accession>
<keyword id="KW-0963">Cytoplasm</keyword>
<keyword id="KW-0489">Methyltransferase</keyword>
<keyword id="KW-1185">Reference proteome</keyword>
<keyword id="KW-0694">RNA-binding</keyword>
<keyword id="KW-0698">rRNA processing</keyword>
<keyword id="KW-0949">S-adenosyl-L-methionine</keyword>
<keyword id="KW-0808">Transferase</keyword>
<proteinExistence type="inferred from homology"/>
<sequence>MNSLFASTARGLEELLKSELEALGAHDCKIVQGGVHFQGDDRLMYQSLLWSRLASRILLPLNEFKVYSDLDLYLGVQAIDWPSIFGVDKTFAVHFSGVNDEIRNSQYGALKVKDAIVDSFTRKMDQRPTVAKQQPDIRVNVFLQRDMASVALDLSGEGLHQRGYRDLTGQAPLKENLAAAIIQRSGWQPGTPMVDPMCGSGTLLIEAAMMASDRAPGLHRGHWGFTAWNAFNEALWRELTTEAQVRARRGLLETSSRFFGSDIDRRVIEMARANARRAGVAELITFNANDISKLVNPLPEGPVGTVISNPPYGERLESEPALIALHNMFGRMMKTAFGGWRLSLFSASPELLSCLQLRADREFKAKNGPLDCVQKNYQLTANPLGAGGALVAEDYANRLRKNVKKLDKWAKQQGIECYRLYDADLPDYNVAVDRYGSKVVVQEYAPPKTIDPQKARQRLFDVINATLAVLELPSNQLVLKTRERQKGKNQYEKLAQKGEFLLVSEYNAKLWVNLTDYLDTGLFLDHRIARQMLGKMSQGKDFLNLFAYTGTASVHAGLGGARSTTTVDMSRTYLEWAEKNLRVNGLTGQQHRLIQADCLSWLSNTDEQFDVIFIDPPTFSNSKRMETTFDVQRDHLVLMKELKRLLRRKGTIMFSNNKRGFQMDLAGIAALGLEAKEITALTQSEDFARNRQIHNCWLVTHSQEEK</sequence>
<comment type="function">
    <text evidence="1">Specifically methylates the guanine in position 2445 (m2G2445) and the guanine in position 2069 (m7G2069) of 23S rRNA.</text>
</comment>
<comment type="catalytic activity">
    <reaction evidence="1">
        <text>guanosine(2445) in 23S rRNA + S-adenosyl-L-methionine = N(2)-methylguanosine(2445) in 23S rRNA + S-adenosyl-L-homocysteine + H(+)</text>
        <dbReference type="Rhea" id="RHEA:42740"/>
        <dbReference type="Rhea" id="RHEA-COMP:10215"/>
        <dbReference type="Rhea" id="RHEA-COMP:10216"/>
        <dbReference type="ChEBI" id="CHEBI:15378"/>
        <dbReference type="ChEBI" id="CHEBI:57856"/>
        <dbReference type="ChEBI" id="CHEBI:59789"/>
        <dbReference type="ChEBI" id="CHEBI:74269"/>
        <dbReference type="ChEBI" id="CHEBI:74481"/>
        <dbReference type="EC" id="2.1.1.173"/>
    </reaction>
</comment>
<comment type="catalytic activity">
    <reaction evidence="1">
        <text>guanosine(2069) in 23S rRNA + S-adenosyl-L-methionine = N(2)-methylguanosine(2069) in 23S rRNA + S-adenosyl-L-homocysteine + H(+)</text>
        <dbReference type="Rhea" id="RHEA:43772"/>
        <dbReference type="Rhea" id="RHEA-COMP:10688"/>
        <dbReference type="Rhea" id="RHEA-COMP:10689"/>
        <dbReference type="ChEBI" id="CHEBI:15378"/>
        <dbReference type="ChEBI" id="CHEBI:57856"/>
        <dbReference type="ChEBI" id="CHEBI:59789"/>
        <dbReference type="ChEBI" id="CHEBI:74269"/>
        <dbReference type="ChEBI" id="CHEBI:74481"/>
        <dbReference type="EC" id="2.1.1.264"/>
    </reaction>
</comment>
<comment type="subcellular location">
    <subcellularLocation>
        <location evidence="1">Cytoplasm</location>
    </subcellularLocation>
</comment>
<comment type="similarity">
    <text evidence="1">Belongs to the methyltransferase superfamily. RlmKL family.</text>
</comment>
<gene>
    <name evidence="1" type="primary">rlmL</name>
    <name type="ordered locus">YPO1418</name>
    <name type="ordered locus">y2751</name>
    <name type="ordered locus">YP_1175</name>
</gene>
<protein>
    <recommendedName>
        <fullName evidence="1">Ribosomal RNA large subunit methyltransferase K/L</fullName>
    </recommendedName>
    <domain>
        <recommendedName>
            <fullName evidence="1">23S rRNA m2G2445 methyltransferase</fullName>
            <ecNumber evidence="1">2.1.1.173</ecNumber>
        </recommendedName>
        <alternativeName>
            <fullName evidence="1">rRNA (guanine-N(2)-)-methyltransferase RlmL</fullName>
        </alternativeName>
    </domain>
    <domain>
        <recommendedName>
            <fullName evidence="1">23S rRNA m7G2069 methyltransferase</fullName>
            <ecNumber evidence="1">2.1.1.264</ecNumber>
        </recommendedName>
        <alternativeName>
            <fullName evidence="1">rRNA (guanine-N(7)-)-methyltransferase RlmK</fullName>
        </alternativeName>
    </domain>
</protein>
<organism>
    <name type="scientific">Yersinia pestis</name>
    <dbReference type="NCBI Taxonomy" id="632"/>
    <lineage>
        <taxon>Bacteria</taxon>
        <taxon>Pseudomonadati</taxon>
        <taxon>Pseudomonadota</taxon>
        <taxon>Gammaproteobacteria</taxon>
        <taxon>Enterobacterales</taxon>
        <taxon>Yersiniaceae</taxon>
        <taxon>Yersinia</taxon>
    </lineage>
</organism>
<evidence type="ECO:0000255" key="1">
    <source>
        <dbReference type="HAMAP-Rule" id="MF_01858"/>
    </source>
</evidence>
<name>RLMKL_YERPE</name>